<feature type="chain" id="PRO_0000323640" description="DNA-directed RNA polymerase subunit alpha">
    <location>
        <begin position="1"/>
        <end position="347"/>
    </location>
</feature>
<feature type="region of interest" description="Alpha N-terminal domain (alpha-NTD)" evidence="1">
    <location>
        <begin position="1"/>
        <end position="226"/>
    </location>
</feature>
<feature type="region of interest" description="Alpha C-terminal domain (alpha-CTD)" evidence="1">
    <location>
        <begin position="245"/>
        <end position="347"/>
    </location>
</feature>
<name>RPOA_MYCTA</name>
<sequence>MLISQRPTLSEDVLTDNRSQFVIEPLEPGFGYTLGNSLRRTLLSSIPGAAVTSIRIDGVLHEFTTVPGVKEDVTEIILNLKSLVVSSEEDEPVTMYLRKQGPGEVTAGDIVPPAGVTVHNPGMHIATLNDKGKLEVELVVERGRGYVPAVQNRASGAEIGRIPVDSIYSPVLKVTYKVDATRVEQRTDFDKLILDVETKNSISPRDALASAGKTLVELFGLARELNVEAEGIEIGPSPAEADHIASFALPIDDLDLTVRSYNCLKREGVHTVGELVARTESDLLDIRNFGQKSIDEVKIKLHQLGLSLKDSPPSFDPSEVAGYDVATGTWSTEGAYDEQDYAETEQL</sequence>
<reference key="1">
    <citation type="journal article" date="2008" name="PLoS ONE">
        <title>Genetic basis of virulence attenuation revealed by comparative genomic analysis of Mycobacterium tuberculosis strain H37Ra versus H37Rv.</title>
        <authorList>
            <person name="Zheng H."/>
            <person name="Lu L."/>
            <person name="Wang B."/>
            <person name="Pu S."/>
            <person name="Zhang X."/>
            <person name="Zhu G."/>
            <person name="Shi W."/>
            <person name="Zhang L."/>
            <person name="Wang H."/>
            <person name="Wang S."/>
            <person name="Zhao G."/>
            <person name="Zhang Y."/>
        </authorList>
    </citation>
    <scope>NUCLEOTIDE SEQUENCE [LARGE SCALE GENOMIC DNA]</scope>
    <source>
        <strain>ATCC 25177 / H37Ra</strain>
    </source>
</reference>
<gene>
    <name evidence="1" type="primary">rpoA</name>
    <name type="ordered locus">MRA_3498</name>
</gene>
<evidence type="ECO:0000255" key="1">
    <source>
        <dbReference type="HAMAP-Rule" id="MF_00059"/>
    </source>
</evidence>
<dbReference type="EC" id="2.7.7.6" evidence="1"/>
<dbReference type="EMBL" id="CP000611">
    <property type="protein sequence ID" value="ABQ75283.1"/>
    <property type="molecule type" value="Genomic_DNA"/>
</dbReference>
<dbReference type="RefSeq" id="WP_003418351.1">
    <property type="nucleotide sequence ID" value="NZ_CP016972.1"/>
</dbReference>
<dbReference type="EMDB" id="EMD-21406"/>
<dbReference type="EMDB" id="EMD-21407"/>
<dbReference type="EMDB" id="EMD-21408"/>
<dbReference type="EMDB" id="EMD-21409"/>
<dbReference type="EMDB" id="EMD-22886"/>
<dbReference type="EMDB" id="EMD-22887"/>
<dbReference type="EMDB" id="EMD-22888"/>
<dbReference type="EMDB" id="EMD-27935"/>
<dbReference type="EMDB" id="EMD-27938"/>
<dbReference type="EMDB" id="EMD-27942"/>
<dbReference type="EMDB" id="EMD-27944"/>
<dbReference type="EMDB" id="EMD-27956"/>
<dbReference type="EMDB" id="EMD-9037"/>
<dbReference type="EMDB" id="EMD-9039"/>
<dbReference type="EMDB" id="EMD-9041"/>
<dbReference type="EMDB" id="EMD-9047"/>
<dbReference type="SMR" id="A5U8D3"/>
<dbReference type="IntAct" id="A5U8D3">
    <property type="interactions" value="1"/>
</dbReference>
<dbReference type="KEGG" id="mra:MRA_3498"/>
<dbReference type="eggNOG" id="COG0202">
    <property type="taxonomic scope" value="Bacteria"/>
</dbReference>
<dbReference type="HOGENOM" id="CLU_053084_0_1_11"/>
<dbReference type="Proteomes" id="UP000001988">
    <property type="component" value="Chromosome"/>
</dbReference>
<dbReference type="GO" id="GO:0005737">
    <property type="term" value="C:cytoplasm"/>
    <property type="evidence" value="ECO:0007669"/>
    <property type="project" value="UniProtKB-ARBA"/>
</dbReference>
<dbReference type="GO" id="GO:0000428">
    <property type="term" value="C:DNA-directed RNA polymerase complex"/>
    <property type="evidence" value="ECO:0007669"/>
    <property type="project" value="UniProtKB-KW"/>
</dbReference>
<dbReference type="GO" id="GO:0003677">
    <property type="term" value="F:DNA binding"/>
    <property type="evidence" value="ECO:0007669"/>
    <property type="project" value="UniProtKB-UniRule"/>
</dbReference>
<dbReference type="GO" id="GO:0003899">
    <property type="term" value="F:DNA-directed RNA polymerase activity"/>
    <property type="evidence" value="ECO:0007669"/>
    <property type="project" value="UniProtKB-UniRule"/>
</dbReference>
<dbReference type="GO" id="GO:0046983">
    <property type="term" value="F:protein dimerization activity"/>
    <property type="evidence" value="ECO:0007669"/>
    <property type="project" value="InterPro"/>
</dbReference>
<dbReference type="GO" id="GO:0006351">
    <property type="term" value="P:DNA-templated transcription"/>
    <property type="evidence" value="ECO:0007669"/>
    <property type="project" value="UniProtKB-UniRule"/>
</dbReference>
<dbReference type="CDD" id="cd06928">
    <property type="entry name" value="RNAP_alpha_NTD"/>
    <property type="match status" value="1"/>
</dbReference>
<dbReference type="FunFam" id="1.10.150.20:FF:000001">
    <property type="entry name" value="DNA-directed RNA polymerase subunit alpha"/>
    <property type="match status" value="1"/>
</dbReference>
<dbReference type="FunFam" id="2.170.120.12:FF:000001">
    <property type="entry name" value="DNA-directed RNA polymerase subunit alpha"/>
    <property type="match status" value="1"/>
</dbReference>
<dbReference type="Gene3D" id="1.10.150.20">
    <property type="entry name" value="5' to 3' exonuclease, C-terminal subdomain"/>
    <property type="match status" value="1"/>
</dbReference>
<dbReference type="Gene3D" id="2.170.120.12">
    <property type="entry name" value="DNA-directed RNA polymerase, insert domain"/>
    <property type="match status" value="1"/>
</dbReference>
<dbReference type="Gene3D" id="3.30.1360.10">
    <property type="entry name" value="RNA polymerase, RBP11-like subunit"/>
    <property type="match status" value="1"/>
</dbReference>
<dbReference type="HAMAP" id="MF_00059">
    <property type="entry name" value="RNApol_bact_RpoA"/>
    <property type="match status" value="1"/>
</dbReference>
<dbReference type="InterPro" id="IPR011262">
    <property type="entry name" value="DNA-dir_RNA_pol_insert"/>
</dbReference>
<dbReference type="InterPro" id="IPR011263">
    <property type="entry name" value="DNA-dir_RNA_pol_RpoA/D/Rpb3"/>
</dbReference>
<dbReference type="InterPro" id="IPR011773">
    <property type="entry name" value="DNA-dir_RpoA"/>
</dbReference>
<dbReference type="InterPro" id="IPR036603">
    <property type="entry name" value="RBP11-like"/>
</dbReference>
<dbReference type="InterPro" id="IPR011260">
    <property type="entry name" value="RNAP_asu_C"/>
</dbReference>
<dbReference type="InterPro" id="IPR036643">
    <property type="entry name" value="RNApol_insert_sf"/>
</dbReference>
<dbReference type="NCBIfam" id="NF003513">
    <property type="entry name" value="PRK05182.1-2"/>
    <property type="match status" value="1"/>
</dbReference>
<dbReference type="NCBIfam" id="NF003514">
    <property type="entry name" value="PRK05182.1-4"/>
    <property type="match status" value="1"/>
</dbReference>
<dbReference type="NCBIfam" id="NF003519">
    <property type="entry name" value="PRK05182.2-5"/>
    <property type="match status" value="1"/>
</dbReference>
<dbReference type="NCBIfam" id="TIGR02027">
    <property type="entry name" value="rpoA"/>
    <property type="match status" value="1"/>
</dbReference>
<dbReference type="Pfam" id="PF01000">
    <property type="entry name" value="RNA_pol_A_bac"/>
    <property type="match status" value="1"/>
</dbReference>
<dbReference type="Pfam" id="PF03118">
    <property type="entry name" value="RNA_pol_A_CTD"/>
    <property type="match status" value="1"/>
</dbReference>
<dbReference type="Pfam" id="PF01193">
    <property type="entry name" value="RNA_pol_L"/>
    <property type="match status" value="1"/>
</dbReference>
<dbReference type="SMART" id="SM00662">
    <property type="entry name" value="RPOLD"/>
    <property type="match status" value="1"/>
</dbReference>
<dbReference type="SUPFAM" id="SSF47789">
    <property type="entry name" value="C-terminal domain of RNA polymerase alpha subunit"/>
    <property type="match status" value="1"/>
</dbReference>
<dbReference type="SUPFAM" id="SSF56553">
    <property type="entry name" value="Insert subdomain of RNA polymerase alpha subunit"/>
    <property type="match status" value="1"/>
</dbReference>
<dbReference type="SUPFAM" id="SSF55257">
    <property type="entry name" value="RBP11-like subunits of RNA polymerase"/>
    <property type="match status" value="1"/>
</dbReference>
<comment type="function">
    <text evidence="1">DNA-dependent RNA polymerase catalyzes the transcription of DNA into RNA using the four ribonucleoside triphosphates as substrates.</text>
</comment>
<comment type="catalytic activity">
    <reaction evidence="1">
        <text>RNA(n) + a ribonucleoside 5'-triphosphate = RNA(n+1) + diphosphate</text>
        <dbReference type="Rhea" id="RHEA:21248"/>
        <dbReference type="Rhea" id="RHEA-COMP:14527"/>
        <dbReference type="Rhea" id="RHEA-COMP:17342"/>
        <dbReference type="ChEBI" id="CHEBI:33019"/>
        <dbReference type="ChEBI" id="CHEBI:61557"/>
        <dbReference type="ChEBI" id="CHEBI:140395"/>
        <dbReference type="EC" id="2.7.7.6"/>
    </reaction>
</comment>
<comment type="subunit">
    <text evidence="1">Homodimer. The RNAP catalytic core consists of 2 alpha, 1 beta, 1 beta' and 1 omega subunit. When a sigma factor is associated with the core the holoenzyme is formed, which can initiate transcription.</text>
</comment>
<comment type="domain">
    <text evidence="1">The N-terminal domain is essential for RNAP assembly and basal transcription, whereas the C-terminal domain is involved in interaction with transcriptional regulators and with upstream promoter elements.</text>
</comment>
<comment type="similarity">
    <text evidence="1">Belongs to the RNA polymerase alpha chain family.</text>
</comment>
<proteinExistence type="inferred from homology"/>
<accession>A5U8D3</accession>
<organism>
    <name type="scientific">Mycobacterium tuberculosis (strain ATCC 25177 / H37Ra)</name>
    <dbReference type="NCBI Taxonomy" id="419947"/>
    <lineage>
        <taxon>Bacteria</taxon>
        <taxon>Bacillati</taxon>
        <taxon>Actinomycetota</taxon>
        <taxon>Actinomycetes</taxon>
        <taxon>Mycobacteriales</taxon>
        <taxon>Mycobacteriaceae</taxon>
        <taxon>Mycobacterium</taxon>
        <taxon>Mycobacterium tuberculosis complex</taxon>
    </lineage>
</organism>
<protein>
    <recommendedName>
        <fullName evidence="1">DNA-directed RNA polymerase subunit alpha</fullName>
        <shortName evidence="1">RNAP subunit alpha</shortName>
        <ecNumber evidence="1">2.7.7.6</ecNumber>
    </recommendedName>
    <alternativeName>
        <fullName evidence="1">RNA polymerase subunit alpha</fullName>
    </alternativeName>
    <alternativeName>
        <fullName evidence="1">Transcriptase subunit alpha</fullName>
    </alternativeName>
</protein>
<keyword id="KW-0240">DNA-directed RNA polymerase</keyword>
<keyword id="KW-0548">Nucleotidyltransferase</keyword>
<keyword id="KW-1185">Reference proteome</keyword>
<keyword id="KW-0804">Transcription</keyword>
<keyword id="KW-0808">Transferase</keyword>